<sequence length="365" mass="41094">MASQLNEAIFAARRRNDDDDTTRSSVFTYTNSNNTRGPFEGPNYHIAPRWVYNLTSIWMIFVVFASVFTNGLVIVATLKFKKLRHPLNWILVNMAIADLGETVIASTISVFNQIFGYFILGHPMCVLEGFTVSTCGITALWSLTVIAWERWFVVCKPFGNIKFDEKLAATGIIFSWVWSAGWCAPPMFGWSRFWPHGLKTSCGPDVFSGSSDPGVQSYMLVLMITCCIIPLAIIILCYLHVWWTIRQVAQQQKESESTQKAEREVSRMVVVMIVAYIFCWGPYTFFACFAAFSPGYSFHPLAAALPAYFAKSATIYNPIIYVFMNRQFRNCIYQMFGKKVDDGSEVSSTSRTEVSSVSNSSVSPA</sequence>
<protein>
    <recommendedName>
        <fullName>Red-sensitive opsin</fullName>
    </recommendedName>
    <alternativeName>
        <fullName>Red cone photoreceptor pigment</fullName>
    </alternativeName>
</protein>
<proteinExistence type="evidence at transcript level"/>
<gene>
    <name type="primary">opn1lw1</name>
</gene>
<organism>
    <name type="scientific">Xenopus laevis</name>
    <name type="common">African clawed frog</name>
    <dbReference type="NCBI Taxonomy" id="8355"/>
    <lineage>
        <taxon>Eukaryota</taxon>
        <taxon>Metazoa</taxon>
        <taxon>Chordata</taxon>
        <taxon>Craniata</taxon>
        <taxon>Vertebrata</taxon>
        <taxon>Euteleostomi</taxon>
        <taxon>Amphibia</taxon>
        <taxon>Batrachia</taxon>
        <taxon>Anura</taxon>
        <taxon>Pipoidea</taxon>
        <taxon>Pipidae</taxon>
        <taxon>Xenopodinae</taxon>
        <taxon>Xenopus</taxon>
        <taxon>Xenopus</taxon>
    </lineage>
</organism>
<accession>O12948</accession>
<accession>Q66IX0</accession>
<feature type="chain" id="PRO_0000197803" description="Red-sensitive opsin">
    <location>
        <begin position="1"/>
        <end position="365"/>
    </location>
</feature>
<feature type="topological domain" description="Extracellular" evidence="2">
    <location>
        <begin position="1"/>
        <end position="51"/>
    </location>
</feature>
<feature type="transmembrane region" description="Helical; Name=1" evidence="2">
    <location>
        <begin position="52"/>
        <end position="76"/>
    </location>
</feature>
<feature type="topological domain" description="Cytoplasmic" evidence="2">
    <location>
        <begin position="77"/>
        <end position="88"/>
    </location>
</feature>
<feature type="transmembrane region" description="Helical; Name=2" evidence="2">
    <location>
        <begin position="89"/>
        <end position="113"/>
    </location>
</feature>
<feature type="topological domain" description="Extracellular" evidence="2">
    <location>
        <begin position="114"/>
        <end position="128"/>
    </location>
</feature>
<feature type="transmembrane region" description="Helical; Name=3" evidence="2">
    <location>
        <begin position="129"/>
        <end position="148"/>
    </location>
</feature>
<feature type="topological domain" description="Cytoplasmic" evidence="2">
    <location>
        <begin position="149"/>
        <end position="167"/>
    </location>
</feature>
<feature type="transmembrane region" description="Helical; Name=4" evidence="2">
    <location>
        <begin position="168"/>
        <end position="191"/>
    </location>
</feature>
<feature type="topological domain" description="Extracellular" evidence="2">
    <location>
        <begin position="192"/>
        <end position="217"/>
    </location>
</feature>
<feature type="transmembrane region" description="Helical; Name=5" evidence="2">
    <location>
        <begin position="218"/>
        <end position="245"/>
    </location>
</feature>
<feature type="topological domain" description="Cytoplasmic" evidence="2">
    <location>
        <begin position="246"/>
        <end position="267"/>
    </location>
</feature>
<feature type="transmembrane region" description="Helical; Name=6" evidence="2">
    <location>
        <begin position="268"/>
        <end position="291"/>
    </location>
</feature>
<feature type="topological domain" description="Extracellular" evidence="2">
    <location>
        <begin position="292"/>
        <end position="299"/>
    </location>
</feature>
<feature type="transmembrane region" description="Helical; Name=7" evidence="2">
    <location>
        <begin position="300"/>
        <end position="324"/>
    </location>
</feature>
<feature type="topological domain" description="Cytoplasmic" evidence="2">
    <location>
        <begin position="325"/>
        <end position="365"/>
    </location>
</feature>
<feature type="region of interest" description="Disordered" evidence="4">
    <location>
        <begin position="342"/>
        <end position="365"/>
    </location>
</feature>
<feature type="compositionally biased region" description="Low complexity" evidence="4">
    <location>
        <begin position="345"/>
        <end position="365"/>
    </location>
</feature>
<feature type="modified residue" description="N6-(retinylidene)lysine" evidence="1">
    <location>
        <position position="311"/>
    </location>
</feature>
<feature type="glycosylation site" description="N-linked (GlcNAc...) asparagine" evidence="2">
    <location>
        <position position="33"/>
    </location>
</feature>
<feature type="disulfide bond" evidence="3">
    <location>
        <begin position="125"/>
        <end position="202"/>
    </location>
</feature>
<comment type="function">
    <text>Visual pigments are the light-absorbing molecules that mediate vision. They consist of an apoprotein, opsin, covalently linked to cis-retinal.</text>
</comment>
<comment type="subcellular location">
    <subcellularLocation>
        <location>Membrane</location>
        <topology>Multi-pass membrane protein</topology>
    </subcellularLocation>
</comment>
<comment type="PTM">
    <text>Phosphorylated on some or all of the serine and threonine residues present in the C-terminal region.</text>
</comment>
<comment type="similarity">
    <text evidence="3">Belongs to the G-protein coupled receptor 1 family. Opsin subfamily.</text>
</comment>
<name>OPSR_XENLA</name>
<evidence type="ECO:0000250" key="1"/>
<evidence type="ECO:0000255" key="2"/>
<evidence type="ECO:0000255" key="3">
    <source>
        <dbReference type="PROSITE-ProRule" id="PRU00521"/>
    </source>
</evidence>
<evidence type="ECO:0000256" key="4">
    <source>
        <dbReference type="SAM" id="MobiDB-lite"/>
    </source>
</evidence>
<dbReference type="EMBL" id="U90895">
    <property type="protein sequence ID" value="AAC60374.1"/>
    <property type="molecule type" value="mRNA"/>
</dbReference>
<dbReference type="EMBL" id="BC081156">
    <property type="protein sequence ID" value="AAH81156.1"/>
    <property type="molecule type" value="mRNA"/>
</dbReference>
<dbReference type="RefSeq" id="NP_001084114.1">
    <property type="nucleotide sequence ID" value="NM_001090645.1"/>
</dbReference>
<dbReference type="SMR" id="O12948"/>
<dbReference type="GlyCosmos" id="O12948">
    <property type="glycosylation" value="1 site, No reported glycans"/>
</dbReference>
<dbReference type="DNASU" id="399310"/>
<dbReference type="GeneID" id="399310"/>
<dbReference type="KEGG" id="xla:399310"/>
<dbReference type="AGR" id="Xenbase:XB-GENE-955013"/>
<dbReference type="CTD" id="399310"/>
<dbReference type="Xenbase" id="XB-GENE-955013">
    <property type="gene designation" value="opn1lw.L"/>
</dbReference>
<dbReference type="OrthoDB" id="8545112at2759"/>
<dbReference type="Proteomes" id="UP000186698">
    <property type="component" value="Chromosome 8L"/>
</dbReference>
<dbReference type="Bgee" id="399310">
    <property type="expression patterns" value="Expressed in camera-type eye and 5 other cell types or tissues"/>
</dbReference>
<dbReference type="GO" id="GO:0001750">
    <property type="term" value="C:photoreceptor outer segment"/>
    <property type="evidence" value="ECO:0000318"/>
    <property type="project" value="GO_Central"/>
</dbReference>
<dbReference type="GO" id="GO:0005886">
    <property type="term" value="C:plasma membrane"/>
    <property type="evidence" value="ECO:0000318"/>
    <property type="project" value="GO_Central"/>
</dbReference>
<dbReference type="GO" id="GO:0008020">
    <property type="term" value="F:G protein-coupled photoreceptor activity"/>
    <property type="evidence" value="ECO:0000318"/>
    <property type="project" value="GO_Central"/>
</dbReference>
<dbReference type="GO" id="GO:0016039">
    <property type="term" value="P:absorption of UV light"/>
    <property type="evidence" value="ECO:0000314"/>
    <property type="project" value="AgBase"/>
</dbReference>
<dbReference type="GO" id="GO:0016038">
    <property type="term" value="P:absorption of visible light"/>
    <property type="evidence" value="ECO:0000314"/>
    <property type="project" value="AgBase"/>
</dbReference>
<dbReference type="GO" id="GO:0071482">
    <property type="term" value="P:cellular response to light stimulus"/>
    <property type="evidence" value="ECO:0000318"/>
    <property type="project" value="GO_Central"/>
</dbReference>
<dbReference type="GO" id="GO:0007186">
    <property type="term" value="P:G protein-coupled receptor signaling pathway"/>
    <property type="evidence" value="ECO:0000318"/>
    <property type="project" value="GO_Central"/>
</dbReference>
<dbReference type="GO" id="GO:0007602">
    <property type="term" value="P:phototransduction"/>
    <property type="evidence" value="ECO:0000318"/>
    <property type="project" value="GO_Central"/>
</dbReference>
<dbReference type="GO" id="GO:0007601">
    <property type="term" value="P:visual perception"/>
    <property type="evidence" value="ECO:0007669"/>
    <property type="project" value="UniProtKB-KW"/>
</dbReference>
<dbReference type="CDD" id="cd15081">
    <property type="entry name" value="7tmA_LWS_opsin"/>
    <property type="match status" value="1"/>
</dbReference>
<dbReference type="FunFam" id="1.20.1070.10:FF:000090">
    <property type="entry name" value="Long-wave-sensitive opsin 1"/>
    <property type="match status" value="1"/>
</dbReference>
<dbReference type="Gene3D" id="1.20.1070.10">
    <property type="entry name" value="Rhodopsin 7-helix transmembrane proteins"/>
    <property type="match status" value="1"/>
</dbReference>
<dbReference type="InterPro" id="IPR050125">
    <property type="entry name" value="GPCR_opsins"/>
</dbReference>
<dbReference type="InterPro" id="IPR000276">
    <property type="entry name" value="GPCR_Rhodpsn"/>
</dbReference>
<dbReference type="InterPro" id="IPR017452">
    <property type="entry name" value="GPCR_Rhodpsn_7TM"/>
</dbReference>
<dbReference type="InterPro" id="IPR001760">
    <property type="entry name" value="Opsin"/>
</dbReference>
<dbReference type="InterPro" id="IPR000378">
    <property type="entry name" value="Opsin_red/grn"/>
</dbReference>
<dbReference type="InterPro" id="IPR027430">
    <property type="entry name" value="Retinal_BS"/>
</dbReference>
<dbReference type="PANTHER" id="PTHR24240">
    <property type="entry name" value="OPSIN"/>
    <property type="match status" value="1"/>
</dbReference>
<dbReference type="Pfam" id="PF00001">
    <property type="entry name" value="7tm_1"/>
    <property type="match status" value="1"/>
</dbReference>
<dbReference type="PRINTS" id="PR00237">
    <property type="entry name" value="GPCRRHODOPSN"/>
</dbReference>
<dbReference type="PRINTS" id="PR00238">
    <property type="entry name" value="OPSIN"/>
</dbReference>
<dbReference type="PRINTS" id="PR00575">
    <property type="entry name" value="OPSINREDGRN"/>
</dbReference>
<dbReference type="SMART" id="SM01381">
    <property type="entry name" value="7TM_GPCR_Srsx"/>
    <property type="match status" value="1"/>
</dbReference>
<dbReference type="SUPFAM" id="SSF81321">
    <property type="entry name" value="Family A G protein-coupled receptor-like"/>
    <property type="match status" value="1"/>
</dbReference>
<dbReference type="PROSITE" id="PS00237">
    <property type="entry name" value="G_PROTEIN_RECEP_F1_1"/>
    <property type="match status" value="1"/>
</dbReference>
<dbReference type="PROSITE" id="PS50262">
    <property type="entry name" value="G_PROTEIN_RECEP_F1_2"/>
    <property type="match status" value="1"/>
</dbReference>
<dbReference type="PROSITE" id="PS00238">
    <property type="entry name" value="OPSIN"/>
    <property type="match status" value="1"/>
</dbReference>
<keyword id="KW-0157">Chromophore</keyword>
<keyword id="KW-1015">Disulfide bond</keyword>
<keyword id="KW-0297">G-protein coupled receptor</keyword>
<keyword id="KW-0325">Glycoprotein</keyword>
<keyword id="KW-0472">Membrane</keyword>
<keyword id="KW-0597">Phosphoprotein</keyword>
<keyword id="KW-0600">Photoreceptor protein</keyword>
<keyword id="KW-0675">Receptor</keyword>
<keyword id="KW-1185">Reference proteome</keyword>
<keyword id="KW-0681">Retinal protein</keyword>
<keyword id="KW-0716">Sensory transduction</keyword>
<keyword id="KW-0807">Transducer</keyword>
<keyword id="KW-0812">Transmembrane</keyword>
<keyword id="KW-1133">Transmembrane helix</keyword>
<keyword id="KW-0844">Vision</keyword>
<reference key="1">
    <citation type="journal article" date="1998" name="J. Neurobiol.">
        <title>Sequential genesis and determination of cone and rod photoreceptors in Xenopus.</title>
        <authorList>
            <person name="Chang W.S."/>
            <person name="Harris W.A."/>
        </authorList>
    </citation>
    <scope>NUCLEOTIDE SEQUENCE [MRNA]</scope>
</reference>
<reference key="2">
    <citation type="submission" date="2004-08" db="EMBL/GenBank/DDBJ databases">
        <authorList>
            <consortium name="NIH - Xenopus Gene Collection (XGC) project"/>
        </authorList>
    </citation>
    <scope>NUCLEOTIDE SEQUENCE [LARGE SCALE MRNA]</scope>
    <source>
        <tissue>Brain</tissue>
    </source>
</reference>